<dbReference type="EC" id="2.7.7.48" evidence="1"/>
<dbReference type="EC" id="3.1.-.-" evidence="1"/>
<dbReference type="EMBL" id="AY216514">
    <property type="protein sequence ID" value="AAP44550.2"/>
    <property type="molecule type" value="Genomic_RNA"/>
</dbReference>
<dbReference type="RefSeq" id="YP_001649214.1">
    <property type="nucleotide sequence ID" value="NC_010250.1"/>
</dbReference>
<dbReference type="SMR" id="Q6XQH7"/>
<dbReference type="IntAct" id="Q6XQH7">
    <property type="interactions" value="1"/>
</dbReference>
<dbReference type="KEGG" id="vg:5848321"/>
<dbReference type="Proteomes" id="UP000009264">
    <property type="component" value="Genome"/>
</dbReference>
<dbReference type="GO" id="GO:0030430">
    <property type="term" value="C:host cell cytoplasm"/>
    <property type="evidence" value="ECO:0007669"/>
    <property type="project" value="UniProtKB-SubCell"/>
</dbReference>
<dbReference type="GO" id="GO:0044423">
    <property type="term" value="C:virion component"/>
    <property type="evidence" value="ECO:0007669"/>
    <property type="project" value="UniProtKB-KW"/>
</dbReference>
<dbReference type="GO" id="GO:0016787">
    <property type="term" value="F:hydrolase activity"/>
    <property type="evidence" value="ECO:0007669"/>
    <property type="project" value="UniProtKB-KW"/>
</dbReference>
<dbReference type="GO" id="GO:0046872">
    <property type="term" value="F:metal ion binding"/>
    <property type="evidence" value="ECO:0007669"/>
    <property type="project" value="UniProtKB-KW"/>
</dbReference>
<dbReference type="GO" id="GO:0000166">
    <property type="term" value="F:nucleotide binding"/>
    <property type="evidence" value="ECO:0007669"/>
    <property type="project" value="UniProtKB-UniRule"/>
</dbReference>
<dbReference type="GO" id="GO:0003968">
    <property type="term" value="F:RNA-directed RNA polymerase activity"/>
    <property type="evidence" value="ECO:0007669"/>
    <property type="project" value="UniProtKB-UniRule"/>
</dbReference>
<dbReference type="GO" id="GO:0075526">
    <property type="term" value="P:cap snatching"/>
    <property type="evidence" value="ECO:0007669"/>
    <property type="project" value="UniProtKB-UniRule"/>
</dbReference>
<dbReference type="GO" id="GO:0039689">
    <property type="term" value="P:negative stranded viral RNA replication"/>
    <property type="evidence" value="ECO:0000250"/>
    <property type="project" value="UniProtKB"/>
</dbReference>
<dbReference type="GO" id="GO:0039696">
    <property type="term" value="P:RNA-templated viral transcription"/>
    <property type="evidence" value="ECO:0000250"/>
    <property type="project" value="UniProtKB"/>
</dbReference>
<dbReference type="Gene3D" id="3.30.70.2640">
    <property type="entry name" value="Arenavirus RNA polymerase"/>
    <property type="match status" value="1"/>
</dbReference>
<dbReference type="Gene3D" id="1.20.1440.300">
    <property type="entry name" value="RNA-directed RNA polymerase L, helical domain"/>
    <property type="match status" value="1"/>
</dbReference>
<dbReference type="HAMAP" id="MF_04086">
    <property type="entry name" value="ARENA_L"/>
    <property type="match status" value="1"/>
</dbReference>
<dbReference type="InterPro" id="IPR026382">
    <property type="entry name" value="CapSnatch_arenavir"/>
</dbReference>
<dbReference type="InterPro" id="IPR048006">
    <property type="entry name" value="CapSnatch_bunyavir"/>
</dbReference>
<dbReference type="InterPro" id="IPR007099">
    <property type="entry name" value="RNA-dir_pol_NSvirus"/>
</dbReference>
<dbReference type="InterPro" id="IPR010453">
    <property type="entry name" value="RNA_pol_arenavir"/>
</dbReference>
<dbReference type="NCBIfam" id="TIGR04202">
    <property type="entry name" value="capSnatchArena"/>
    <property type="match status" value="1"/>
</dbReference>
<dbReference type="Pfam" id="PF06317">
    <property type="entry name" value="Arena_RNA_pol"/>
    <property type="match status" value="1"/>
</dbReference>
<dbReference type="Pfam" id="PF17296">
    <property type="entry name" value="ArenaCapSnatch"/>
    <property type="match status" value="1"/>
</dbReference>
<dbReference type="PIRSF" id="PIRSF000836">
    <property type="entry name" value="L_ArenaV"/>
    <property type="match status" value="1"/>
</dbReference>
<dbReference type="PROSITE" id="PS50525">
    <property type="entry name" value="RDRP_SSRNA_NEG_SEG"/>
    <property type="match status" value="1"/>
</dbReference>
<sequence>MDESVSSLFDLLRKHFPAKEEISRQITVVTSQTEMRMILTEGFKLLSLLIELDSCEVNNCSHNKEDLTVEAILSKDNILTIALPRIVPDGYSLYGNVLILLETFVRVNPSSFEQKYNQDMNKLLSLKNDLQLCGITLVPLVDGRTNYYNKFVDDWVIERFRWLLTQIMKVAKESGESIEELEYQRLVTSLSKLENQSLGFENIIKMPQTGIDYRDKLKARMFANLSNKMKESEINQSLLSLKLAFDEAYNDESHLKKFQKTNKEDLIFKLGQQINLSDEKLSCMSCSSKLFSIVSSITQNRDKLDSHVMSVSNAKLWHHESGIANVNEYLRILSVCNKIKSAKILNTRRNTLLFLDMIVLNFIDDCWKNDPTILFQFKKSGLLVGQLAYFVNDRFFDLLLLKELLSKKLKSSPDWIHRCLCNIRKQEFFDISGVEFWIRQPDYESVEELCCALEPVKPKLQYCRDEDNHENHKLDLADKDNYFTCLSVLSSVCLGLVNSMKTSFTSKMVINEKSPNNFYGEVELKECYCQRFYVSDEITGLLFYQKTGEKSRCYSIGVTMHGSYKYIGSFYCDPKRFFLPIFSQVVLFQMTEEMMSWLPEEPSYKEPVVANLRKLILMLLCNPSKRNQNFLQGMRYFIMAYVNQFHSVELMSKLEVPCKSVSEECVQKLTYNLLVDVLTKGDVNEHMTRKFKFCLNVSYLCHLITKETPDRLTDQIKCFEKFLEPKLKFKSVIINPNLTGDLTEEQEEQLLNSIEKLLGKGLQDINDSSEPGISRELLSMCISAFNRDLLRVNGKLKNDPYKPNFTSTALDLSSNKSVVIPKLDELGNPISKYDYELLVSSCIASMAESFKTKGKYKLDPTSQEFLILKNLYSLMSKSKRDDHMKDSEDSKQNLSSDLENLSEEQVLILEQVKRDVNLALSKMRETKLKEKTEARQSSSGSSLKNQQKRQAELQERLSELWSEFMCMKIITVEVSLHEIKDFDPDLIDHTTLKSMLDKLYNSDLASEFFLEEILNPCPLEFLVKNMTTSSYLEGDLFECFKYTLISAGFDQKLGTYEHKNKTRLGFKYEALKVREEGRMSLRESNSEAIARRLDRSVFSNSALRNLCFYSDESPISYSHVSSDTGKLKFGLSYKEQVGSNRELYVGDLNTKLMTRLIEDFSESVVSNMNYSCLNSEKEFERSVMEMKMSVNLGEMNFSLDHSKWGPYMSPVIFAAFLQGLKLEQGSMCTPVSVEPIITLLSWHIHKVVEVPYNVIHAYMTGMIKRQLGLMSPGESSKTEAFIHRLLVDEREPLSHVMSVLDMGQGILHNTSDLYGLVTEQFINYAMRILYDVSMTSFTSSDDQITMVKLNEDLKDMDNPEVISNWERMINFHTFISSKFNKFVSPKTVIGTFAAEFKSRFFVWGEEVPLLTKFVSAALHNIKCKTPIQLSETIDTISDQCVANGVSVEIVSCISNRTNKLVRYSGFPDNPFLSVENMDVKDWVDGNRGYRLQRNIESHLEVDGCTRFVRQAARKVFRNIKSGKIMEQTLVNLVQEDGDKAFQGFMKSVDVSDDDIKLLQNFRWINLSTHGDMRLVLRTKLMSSRRIIEQEEIPGLIKSIQSKLSKNFVRGAKRILADSINKSAFQSSIASGFIGFCKSMGSKCVRLGGGGFGYIKDIKNKVKHDCLCDICFRWRGCVYCPSSCADVFEFSRPLMWDYFTLVLTNACELGEWVFEDVEIPKDLYFLRNPNLFWLVKPRVTCQLEERLGLSHILQSIRKNYPTLFETHLSPFMSDFMVGKTLGSLTVKFLDLCVALDLANENLGITKHFLKERRHEIYVVKQDESSQSHIRNVKGIESSVELNSMQVCNNFLTQLLMSSFIQPLVLTSSVFKKFNWFAEVLCLKTEEEVCLKQLTDFVLQVKKFNVDRAMHIEDLSAGYISSTINVTSFSLSVPTFLECVDSDFINKEGNEPGDFKDLLSSEFTKDTLTLDFCIQVSHIKRSVKFNVKRTLVYTLAVRTQIEKKIILEAIGTDDQISLIVSELDLFCSGHTGNHFVLDAAPLIYSEPLIAGSLKFDLLSMLRDQELSLTSSEKMPTFNFDFSSQKHHIVNKFAYKLVGPSVYDEPLVLNKGIVYSGERKLTSLGVDVSGERIVQAMGELDSISEQELFLTNLWGYSKETDIKVRIIQDNLKILTDNYFVQLKNSLKTFAEWLNLGNYMLCYSKTLDTIMISDVSGRIKLKGVICRKLIEDEVMEVE</sequence>
<name>L_OLVVA</name>
<gene>
    <name evidence="1" type="primary">L</name>
</gene>
<reference key="1">
    <citation type="journal article" date="2003" name="Virology">
        <title>New insights into the evolutionary relationships between arenaviruses provided by comparative analysis of small and large segment sequences.</title>
        <authorList>
            <person name="Charrel R.N."/>
            <person name="Lemasson J.J."/>
            <person name="Garbutt M."/>
            <person name="Khelifa R."/>
            <person name="De Micco P."/>
            <person name="Feldmann H."/>
            <person name="de Lamballerie X."/>
        </authorList>
    </citation>
    <scope>NUCLEOTIDE SEQUENCE [GENOMIC RNA]</scope>
</reference>
<reference key="2">
    <citation type="submission" date="2004-05" db="EMBL/GenBank/DDBJ databases">
        <title>Complete sequence determination and analysis of the large RNA segment of arenaviruses.</title>
        <authorList>
            <person name="Emonet S."/>
            <person name="de Lamballerie X."/>
            <person name="de Micco P."/>
            <person name="Charrel R.N."/>
        </authorList>
    </citation>
    <scope>NUCLEOTIDE SEQUENCE [GENOMIC RNA]</scope>
</reference>
<reference key="3">
    <citation type="journal article" date="2017" name="Crit. Rev. Microbiol.">
        <title>Bunyaviridae RdRps: structure, motifs, and RNA synthesis machinery.</title>
        <authorList>
            <person name="Amroun A."/>
            <person name="Priet S."/>
            <person name="de Lamballerie X."/>
            <person name="Querat G."/>
        </authorList>
    </citation>
    <scope>REVIEW</scope>
</reference>
<reference key="4">
    <citation type="journal article" date="2020" name="Trends Microbiol.">
        <title>The Cap-Snatching Mechanism of Bunyaviruses.</title>
        <authorList>
            <person name="Olschewski S."/>
            <person name="Cusack S."/>
            <person name="Rosenthal M."/>
        </authorList>
    </citation>
    <scope>REVIEW</scope>
</reference>
<organismHost>
    <name type="scientific">Bolomys</name>
    <dbReference type="NCBI Taxonomy" id="10080"/>
</organismHost>
<proteinExistence type="inferred from homology"/>
<accession>Q6XQH7</accession>
<comment type="function">
    <text evidence="1">RNA-dependent RNA polymerase, which is responsible for the replication and transcription of the viral RNA genome using antigenomic RNA as an intermediate. During transcription, synthesizes subgenomic RNAs and assures their capping by a cap-snatching mechanism, which involves the endonuclease activity cleaving the host capped pre-mRNAs. These short capped RNAs are then used as primers for viral transcription. The 3'-end of subgenomic mRNAs molecules are heterogeneous and not polyadenylated. The replicase function is to direct synthesis of antigenomic and genomic RNA which are encapsidated and non capped. As a consequence of the use of the same enzyme for both transcription and replication, these mechanisms need to be well coordinated. These processes may be regulated by proteins N and Z in a dose-dependent manner. Z protein inhibits the viral polymerase L und thus the viral transcription and RNA synthesis.</text>
</comment>
<comment type="catalytic activity">
    <reaction evidence="1">
        <text>RNA(n) + a ribonucleoside 5'-triphosphate = RNA(n+1) + diphosphate</text>
        <dbReference type="Rhea" id="RHEA:21248"/>
        <dbReference type="Rhea" id="RHEA-COMP:14527"/>
        <dbReference type="Rhea" id="RHEA-COMP:17342"/>
        <dbReference type="ChEBI" id="CHEBI:33019"/>
        <dbReference type="ChEBI" id="CHEBI:61557"/>
        <dbReference type="ChEBI" id="CHEBI:140395"/>
        <dbReference type="EC" id="2.7.7.48"/>
    </reaction>
</comment>
<comment type="cofactor">
    <cofactor evidence="1">
        <name>Mn(2+)</name>
        <dbReference type="ChEBI" id="CHEBI:29035"/>
    </cofactor>
    <text evidence="1">For endonuclease activity. Binds 2 Mn(2+) ions in the active site. The divalent metal ions are crucial for catalytic activity.</text>
</comment>
<comment type="cofactor">
    <cofactor evidence="1">
        <name>Mg(2+)</name>
        <dbReference type="ChEBI" id="CHEBI:18420"/>
    </cofactor>
    <cofactor evidence="1">
        <name>Mn(2+)</name>
        <dbReference type="ChEBI" id="CHEBI:29035"/>
    </cofactor>
    <text evidence="1">For polymerase activity.</text>
</comment>
<comment type="subunit">
    <text evidence="1">Homomultimer; the oligomeric structure is essential for the polymerase activity. Interacts with nucleoprotein N. Interacts with protein Z; this interaction inhibits viral transcription and replication, Z partially blocks the product exit tunnel for the releasing nascent RNA product.</text>
</comment>
<comment type="subcellular location">
    <subcellularLocation>
        <location evidence="1">Virion</location>
    </subcellularLocation>
    <subcellularLocation>
        <location evidence="1">Host cytoplasm</location>
    </subcellularLocation>
</comment>
<comment type="domain">
    <text evidence="1">The N-terminus contains the endonuclease activity (endoN). The central region contains the RdRp activity.</text>
</comment>
<comment type="miscellaneous">
    <text evidence="1">Classified as His(-) endonuclease since it does not have a histidine upstream of the active site that coordinates the first cation. His(-) endonucleases display very low activity in vitro, although they are clearly active in vivo.</text>
</comment>
<comment type="similarity">
    <text evidence="1">Belongs to the Bunyavirales RNA polymerase family.</text>
</comment>
<keyword id="KW-1157">Cap snatching</keyword>
<keyword id="KW-1035">Host cytoplasm</keyword>
<keyword id="KW-0378">Hydrolase</keyword>
<keyword id="KW-0460">Magnesium</keyword>
<keyword id="KW-0464">Manganese</keyword>
<keyword id="KW-0479">Metal-binding</keyword>
<keyword id="KW-0547">Nucleotide-binding</keyword>
<keyword id="KW-0548">Nucleotidyltransferase</keyword>
<keyword id="KW-1185">Reference proteome</keyword>
<keyword id="KW-0696">RNA-directed RNA polymerase</keyword>
<keyword id="KW-0808">Transferase</keyword>
<keyword id="KW-0693">Viral RNA replication</keyword>
<keyword id="KW-0946">Virion</keyword>
<feature type="chain" id="PRO_0000361643" description="RNA-directed RNA polymerase L">
    <location>
        <begin position="1"/>
        <end position="2234"/>
    </location>
</feature>
<feature type="domain" description="RdRp catalytic" evidence="1">
    <location>
        <begin position="1184"/>
        <end position="1383"/>
    </location>
</feature>
<feature type="region of interest" description="Endonuclease" evidence="1">
    <location>
        <begin position="26"/>
        <end position="283"/>
    </location>
</feature>
<feature type="region of interest" description="Disordered" evidence="2">
    <location>
        <begin position="879"/>
        <end position="898"/>
    </location>
</feature>
<feature type="region of interest" description="Disordered" evidence="2">
    <location>
        <begin position="927"/>
        <end position="949"/>
    </location>
</feature>
<feature type="compositionally biased region" description="Basic and acidic residues" evidence="2">
    <location>
        <begin position="879"/>
        <end position="891"/>
    </location>
</feature>
<feature type="compositionally biased region" description="Polar residues" evidence="2">
    <location>
        <begin position="935"/>
        <end position="945"/>
    </location>
</feature>
<feature type="active site" evidence="1">
    <location>
        <position position="115"/>
    </location>
</feature>
<feature type="binding site" evidence="1">
    <location>
        <position position="51"/>
    </location>
    <ligand>
        <name>Mn(2+)</name>
        <dbReference type="ChEBI" id="CHEBI:29035"/>
        <label>1</label>
    </ligand>
</feature>
<feature type="binding site" evidence="1">
    <location>
        <position position="89"/>
    </location>
    <ligand>
        <name>Mn(2+)</name>
        <dbReference type="ChEBI" id="CHEBI:29035"/>
        <label>1</label>
    </ligand>
</feature>
<feature type="binding site" evidence="1">
    <location>
        <position position="89"/>
    </location>
    <ligand>
        <name>Mn(2+)</name>
        <dbReference type="ChEBI" id="CHEBI:29035"/>
        <label>2</label>
    </ligand>
</feature>
<feature type="binding site" evidence="1">
    <location>
        <position position="102"/>
    </location>
    <ligand>
        <name>Mn(2+)</name>
        <dbReference type="ChEBI" id="CHEBI:29035"/>
        <label>1</label>
    </ligand>
</feature>
<feature type="binding site" evidence="1">
    <location>
        <position position="1342"/>
    </location>
    <ligand>
        <name>Mg(2+)</name>
        <dbReference type="ChEBI" id="CHEBI:18420"/>
        <note>catalytic; for RdRp activity</note>
    </ligand>
</feature>
<organism>
    <name type="scientific">Oliveros mammarenavirus (isolate Mouse/Argentina/RIID 3229/1990)</name>
    <name type="common">OLVV</name>
    <dbReference type="NCBI Taxonomy" id="3052322"/>
    <lineage>
        <taxon>Viruses</taxon>
        <taxon>Riboviria</taxon>
        <taxon>Orthornavirae</taxon>
        <taxon>Negarnaviricota</taxon>
        <taxon>Polyploviricotina</taxon>
        <taxon>Ellioviricetes</taxon>
        <taxon>Bunyavirales</taxon>
        <taxon>Arenaviridae</taxon>
        <taxon>Mammarenavirus</taxon>
    </lineage>
</organism>
<evidence type="ECO:0000255" key="1">
    <source>
        <dbReference type="HAMAP-Rule" id="MF_04086"/>
    </source>
</evidence>
<evidence type="ECO:0000256" key="2">
    <source>
        <dbReference type="SAM" id="MobiDB-lite"/>
    </source>
</evidence>
<protein>
    <recommendedName>
        <fullName evidence="1">RNA-directed RNA polymerase L</fullName>
        <shortName evidence="1">Protein L</shortName>
        <ecNumber evidence="1">2.7.7.48</ecNumber>
    </recommendedName>
    <alternativeName>
        <fullName evidence="1">Large structural protein</fullName>
    </alternativeName>
    <alternativeName>
        <fullName evidence="1">Replicase</fullName>
    </alternativeName>
    <alternativeName>
        <fullName evidence="1">Transcriptase</fullName>
    </alternativeName>
    <domain>
        <recommendedName>
            <fullName evidence="1">cap-snatching endonuclease</fullName>
            <ecNumber evidence="1">3.1.-.-</ecNumber>
        </recommendedName>
    </domain>
</protein>